<proteinExistence type="evidence at transcript level"/>
<feature type="initiator methionine" description="Removed; by host" evidence="1">
    <location>
        <position position="1"/>
    </location>
</feature>
<feature type="chain" id="PRO_0000099250" description="Virion membrane protein A16">
    <location>
        <begin position="2"/>
        <end position="377"/>
    </location>
</feature>
<feature type="topological domain" description="Virion surface" evidence="2">
    <location>
        <begin position="2"/>
        <end position="341"/>
    </location>
</feature>
<feature type="transmembrane region" description="Helical; Signal-anchor for type II membrane protein" evidence="2">
    <location>
        <begin position="342"/>
        <end position="362"/>
    </location>
</feature>
<feature type="topological domain" description="Intravirion" evidence="2">
    <location>
        <begin position="363"/>
        <end position="377"/>
    </location>
</feature>
<feature type="lipid moiety-binding region" description="N-myristoyl glycine; by host" evidence="1">
    <location>
        <position position="2"/>
    </location>
</feature>
<reference key="1">
    <citation type="journal article" date="1998" name="Virology">
        <title>The complete genomic sequence of the modified vaccinia Ankara strain: comparison with other orthopoxviruses.</title>
        <authorList>
            <person name="Antoine G."/>
            <person name="Scheiflinger F."/>
            <person name="Dorner F."/>
            <person name="Falkner F.G."/>
        </authorList>
    </citation>
    <scope>NUCLEOTIDE SEQUENCE [LARGE SCALE GENOMIC DNA]</scope>
</reference>
<reference key="2">
    <citation type="submission" date="2004-04" db="EMBL/GenBank/DDBJ databases">
        <authorList>
            <person name="Esposito J.J."/>
            <person name="Frace M."/>
            <person name="Sammons S.A."/>
            <person name="Olsen-Rasmussen M.S."/>
            <person name="Osborne J."/>
            <person name="Khristova M."/>
            <person name="Wohlhueter R.M."/>
        </authorList>
    </citation>
    <scope>NUCLEOTIDE SEQUENCE [LARGE SCALE GENOMIC DNA]</scope>
    <source>
        <strain>Isolate Acambis 3000</strain>
    </source>
</reference>
<name>A16_VACCA</name>
<accession>O93122</accession>
<sequence>MGAAVTLNRIKIAPGIADIRDKYMELGFNYPEYNRAVKFAEESYTYYYETSPGEIKPKFCLIDGMSIDHCSSFIVPEFAKQYVLIHGEPCSSFKFRPGSLIYYQNEVTPEYIKDLKHATDYIASGQRCHFIKKDYLLGDSDSVAKCCSKTNTKHCPKIFNNNYKTEHCDDFMTGFCRNDPGNPNCLEWLRAKRKPAMSTYSDICSKHMDARYCSEFIRIIRPDYFTFGDTALYVFCNDHKGNRNCWCANYPKSNSGDKYLGPRVCWLHECTDESRDRKWLYYNQDVQRTRCKYVGCTINVNSLALKNSQAELTSNCTRTTSAVGDVHPGEPVVKDKIKLPTWLGAAITLVVISVIFYFISIYSRTKIKTNDINVRRR</sequence>
<dbReference type="EMBL" id="U94848">
    <property type="protein sequence ID" value="AAB96467.1"/>
    <property type="molecule type" value="Genomic_DNA"/>
</dbReference>
<dbReference type="EMBL" id="AY603355">
    <property type="protein sequence ID" value="AAT10526.1"/>
    <property type="molecule type" value="Genomic_DNA"/>
</dbReference>
<dbReference type="PIR" id="T37403">
    <property type="entry name" value="T37403"/>
</dbReference>
<dbReference type="SMR" id="O93122"/>
<dbReference type="Proteomes" id="UP000159908">
    <property type="component" value="Segment"/>
</dbReference>
<dbReference type="Proteomes" id="UP000172909">
    <property type="component" value="Segment"/>
</dbReference>
<dbReference type="GO" id="GO:0016020">
    <property type="term" value="C:membrane"/>
    <property type="evidence" value="ECO:0007669"/>
    <property type="project" value="UniProtKB-KW"/>
</dbReference>
<dbReference type="GO" id="GO:0019031">
    <property type="term" value="C:viral envelope"/>
    <property type="evidence" value="ECO:0007669"/>
    <property type="project" value="UniProtKB-KW"/>
</dbReference>
<dbReference type="GO" id="GO:0055036">
    <property type="term" value="C:virion membrane"/>
    <property type="evidence" value="ECO:0007669"/>
    <property type="project" value="UniProtKB-SubCell"/>
</dbReference>
<dbReference type="GO" id="GO:0039663">
    <property type="term" value="P:membrane fusion involved in viral entry into host cell"/>
    <property type="evidence" value="ECO:0007669"/>
    <property type="project" value="UniProtKB-KW"/>
</dbReference>
<dbReference type="GO" id="GO:0046718">
    <property type="term" value="P:symbiont entry into host cell"/>
    <property type="evidence" value="ECO:0007669"/>
    <property type="project" value="UniProtKB-KW"/>
</dbReference>
<dbReference type="InterPro" id="IPR004251">
    <property type="entry name" value="Pox_virus_G9/A16"/>
</dbReference>
<dbReference type="Pfam" id="PF03003">
    <property type="entry name" value="Pox_G9-A16"/>
    <property type="match status" value="1"/>
</dbReference>
<keyword id="KW-1015">Disulfide bond</keyword>
<keyword id="KW-1168">Fusion of virus membrane with host membrane</keyword>
<keyword id="KW-0426">Late protein</keyword>
<keyword id="KW-0449">Lipoprotein</keyword>
<keyword id="KW-0472">Membrane</keyword>
<keyword id="KW-0519">Myristate</keyword>
<keyword id="KW-0735">Signal-anchor</keyword>
<keyword id="KW-0812">Transmembrane</keyword>
<keyword id="KW-1133">Transmembrane helix</keyword>
<keyword id="KW-0261">Viral envelope protein</keyword>
<keyword id="KW-1162">Viral penetration into host cytoplasm</keyword>
<keyword id="KW-0946">Virion</keyword>
<keyword id="KW-1160">Virus entry into host cell</keyword>
<comment type="function">
    <text evidence="1">Envelope protein part of the entry-fusion complex responsible for the virus membrane fusion with host cell membrane during virus entry. Also plays a role in cell-cell fusion (syncytium formation) (By similarity).</text>
</comment>
<comment type="subunit">
    <text evidence="1">Part of a stable entry-fusion complex (EFC) which is at least composed of proteins A16, A21, A28, G3, G9, H2, J5, and L5. Formation of the viral membrane is necessary for the assembly of the complex. Interacts with G9 (By similarity).</text>
</comment>
<comment type="subcellular location">
    <subcellularLocation>
        <location evidence="3">Virion membrane</location>
        <topology evidence="3">Single-pass type II membrane protein</topology>
    </subcellularLocation>
    <text evidence="1">Component of the mature virion (MV) membrane. The mature virion is located in the cytoplasm of infected cells and is probably released by cell lysis.</text>
</comment>
<comment type="induction">
    <text>Expressed in the late phase of the viral replicative cycle.</text>
</comment>
<comment type="PTM">
    <text evidence="1">Most cysteines are linked by disulfide bonds. They are created by the viral disulfide bond formation pathway, a poxvirus-specific redox pathway that operates on the cytoplasmic side of the MV membranes (By similarity).</text>
</comment>
<comment type="similarity">
    <text evidence="3">Belongs to the poxviridae A16/G9/J5 family.</text>
</comment>
<evidence type="ECO:0000250" key="1"/>
<evidence type="ECO:0000255" key="2"/>
<evidence type="ECO:0000305" key="3"/>
<organismHost>
    <name type="scientific">Homo sapiens</name>
    <name type="common">Human</name>
    <dbReference type="NCBI Taxonomy" id="9606"/>
</organismHost>
<gene>
    <name type="ordered locus">MVA127L</name>
    <name type="ordered locus">ACAM3000_MVA_127</name>
</gene>
<protein>
    <recommendedName>
        <fullName>Virion membrane protein A16</fullName>
    </recommendedName>
</protein>
<organism>
    <name type="scientific">Vaccinia virus (strain Ankara)</name>
    <name type="common">VACV</name>
    <dbReference type="NCBI Taxonomy" id="126794"/>
    <lineage>
        <taxon>Viruses</taxon>
        <taxon>Varidnaviria</taxon>
        <taxon>Bamfordvirae</taxon>
        <taxon>Nucleocytoviricota</taxon>
        <taxon>Pokkesviricetes</taxon>
        <taxon>Chitovirales</taxon>
        <taxon>Poxviridae</taxon>
        <taxon>Chordopoxvirinae</taxon>
        <taxon>Orthopoxvirus</taxon>
        <taxon>Vaccinia virus</taxon>
    </lineage>
</organism>